<sequence length="10" mass="1307">QDLDHVFMRF</sequence>
<protein>
    <recommendedName>
        <fullName evidence="4">Myosuppressin</fullName>
        <shortName evidence="4">Rhopr-MS</shortName>
    </recommendedName>
</protein>
<organism>
    <name type="scientific">Rhodnius prolixus</name>
    <name type="common">Triatomid bug</name>
    <dbReference type="NCBI Taxonomy" id="13249"/>
    <lineage>
        <taxon>Eukaryota</taxon>
        <taxon>Metazoa</taxon>
        <taxon>Ecdysozoa</taxon>
        <taxon>Arthropoda</taxon>
        <taxon>Hexapoda</taxon>
        <taxon>Insecta</taxon>
        <taxon>Pterygota</taxon>
        <taxon>Neoptera</taxon>
        <taxon>Paraneoptera</taxon>
        <taxon>Hemiptera</taxon>
        <taxon>Heteroptera</taxon>
        <taxon>Panheteroptera</taxon>
        <taxon>Cimicomorpha</taxon>
        <taxon>Reduviidae</taxon>
        <taxon>Triatominae</taxon>
        <taxon>Rhodnius</taxon>
    </lineage>
</organism>
<comment type="function">
    <text evidence="1">Myoinhibiting neuropeptide.</text>
</comment>
<comment type="subcellular location">
    <subcellularLocation>
        <location evidence="1">Secreted</location>
    </subcellularLocation>
</comment>
<comment type="PTM">
    <text evidence="3">Occurs in three forms: Rhopr-MS has unmodified Gln-1 and Met-8, Pyro-Rhopr-MS has pyroglutamate at Gln-1 and unmodified Met-8, Pyro-ox-Rhopr-MS has pyroglutamate at Gln-1 and oxidation at Met-8.</text>
</comment>
<comment type="mass spectrometry" mass="1306.64" method="MALDI" evidence="3">
    <text>With unmodified Gln-1 and Met-8.</text>
</comment>
<comment type="mass spectrometry" mass="1289.6" method="MALDI" evidence="3">
    <text>With pyroglutamate at Gln-1 and unmodified Met-8.</text>
</comment>
<comment type="mass spectrometry" mass="1305.6" method="MALDI" evidence="3">
    <text>With pyroglutamate at Gln-1 and oxidation at Met-8.</text>
</comment>
<comment type="similarity">
    <text evidence="2">Belongs to the myosuppressin family.</text>
</comment>
<feature type="peptide" id="PRO_0000365767" description="Myosuppressin" evidence="3">
    <location>
        <begin position="1"/>
        <end position="10"/>
    </location>
</feature>
<feature type="modified residue" description="Pyrrolidone carboxylic acid; partial" evidence="3">
    <location>
        <position position="1"/>
    </location>
</feature>
<feature type="modified residue" description="Methionine sulfoxide" evidence="3">
    <location>
        <position position="8"/>
    </location>
</feature>
<feature type="modified residue" description="Phenylalanine amide" evidence="3">
    <location>
        <position position="10"/>
    </location>
</feature>
<feature type="unsure residue" description="L or I" evidence="3">
    <location>
        <position position="3"/>
    </location>
</feature>
<keyword id="KW-0027">Amidation</keyword>
<keyword id="KW-0903">Direct protein sequencing</keyword>
<keyword id="KW-0527">Neuropeptide</keyword>
<keyword id="KW-0558">Oxidation</keyword>
<keyword id="KW-0873">Pyrrolidone carboxylic acid</keyword>
<keyword id="KW-1185">Reference proteome</keyword>
<keyword id="KW-0964">Secreted</keyword>
<name>NEMS_RHOPR</name>
<proteinExistence type="evidence at protein level"/>
<evidence type="ECO:0000250" key="1">
    <source>
        <dbReference type="UniProtKB" id="P61849"/>
    </source>
</evidence>
<evidence type="ECO:0000255" key="2"/>
<evidence type="ECO:0000269" key="3">
    <source>
    </source>
</evidence>
<evidence type="ECO:0000303" key="4">
    <source>
    </source>
</evidence>
<evidence type="ECO:0000305" key="5"/>
<reference evidence="5" key="1">
    <citation type="journal article" date="2009" name="Proteomics">
        <title>The neuropeptidome of Rhodnius prolixus brain.</title>
        <authorList>
            <person name="Ons S."/>
            <person name="Richter F."/>
            <person name="Urlaub H."/>
            <person name="Pomar R.R."/>
        </authorList>
    </citation>
    <scope>PROTEIN SEQUENCE</scope>
    <scope>MASS SPECTROMETRY</scope>
    <scope>PYROGLUTAMATE FORMATION AT GLN-1</scope>
    <scope>OXIDATION AT MET-8</scope>
    <scope>AMIDATION AT PHE-10</scope>
    <source>
        <tissue evidence="3">Brain</tissue>
    </source>
</reference>
<dbReference type="STRING" id="13249.P85816"/>
<dbReference type="InParanoid" id="P85816"/>
<dbReference type="Proteomes" id="UP000015103">
    <property type="component" value="Unassembled WGS sequence"/>
</dbReference>
<dbReference type="GO" id="GO:0005576">
    <property type="term" value="C:extracellular region"/>
    <property type="evidence" value="ECO:0007669"/>
    <property type="project" value="UniProtKB-SubCell"/>
</dbReference>
<dbReference type="GO" id="GO:0007218">
    <property type="term" value="P:neuropeptide signaling pathway"/>
    <property type="evidence" value="ECO:0007669"/>
    <property type="project" value="UniProtKB-KW"/>
</dbReference>
<accession>P85816</accession>